<comment type="function">
    <text evidence="2 5">Specifically inhibits the cysteine protease staphopain B (SspB) by blocking the active site of the enzyme. Probably required to protect cytoplasmic proteins from being degraded by prematurely activated/folded prostaphopain B. Also involved in growth capacity, viability and bacterial morphology.</text>
</comment>
<comment type="subunit">
    <text evidence="1 4">Forms a stable non-covalent complex with prematurely activated/folded SspB.</text>
</comment>
<comment type="subcellular location">
    <subcellularLocation>
        <location evidence="2">Cytoplasm</location>
    </subcellularLocation>
</comment>
<comment type="induction">
    <text evidence="3">Expression occurs in a growth-phase-dependent manner with optimal expression at post-exponential phase. Up-regulated by Agr (accessory gene regulator) and repressed by SarA (staphylococcal accessory regulator) and sigmaB factor.</text>
</comment>
<comment type="miscellaneous">
    <text>Inactivated by staphylococcal serine protease (SspA).</text>
</comment>
<comment type="miscellaneous">
    <text>Disruption of sspC causes a total loss of secreted extracellular proteins and a partial loss of peptidoglycan-associated proteins. Loss of SspC results in profoundly reduced susceptibility of peptidoglycan to lysis by lysostaphin.</text>
</comment>
<comment type="similarity">
    <text evidence="6">Belongs to the protease inhibitor I57 (SspC) family.</text>
</comment>
<feature type="chain" id="PRO_0000220553" description="Staphostatin B">
    <location>
        <begin position="1"/>
        <end position="109"/>
    </location>
</feature>
<feature type="region of interest" description="Binds to staphopain B">
    <location>
        <begin position="97"/>
        <end position="101"/>
    </location>
</feature>
<feature type="mutagenesis site" description="Loss of affinity for SspB." evidence="1">
    <original>G</original>
    <variation>A</variation>
    <variation>R</variation>
    <location>
        <position position="98"/>
    </location>
</feature>
<feature type="strand" evidence="7">
    <location>
        <begin position="3"/>
        <end position="10"/>
    </location>
</feature>
<feature type="helix" evidence="7">
    <location>
        <begin position="13"/>
        <end position="15"/>
    </location>
</feature>
<feature type="helix" evidence="7">
    <location>
        <begin position="18"/>
        <end position="25"/>
    </location>
</feature>
<feature type="strand" evidence="7">
    <location>
        <begin position="29"/>
        <end position="33"/>
    </location>
</feature>
<feature type="turn" evidence="7">
    <location>
        <begin position="34"/>
        <end position="37"/>
    </location>
</feature>
<feature type="strand" evidence="7">
    <location>
        <begin position="38"/>
        <end position="44"/>
    </location>
</feature>
<feature type="strand" evidence="7">
    <location>
        <begin position="50"/>
        <end position="59"/>
    </location>
</feature>
<feature type="turn" evidence="7">
    <location>
        <begin position="60"/>
        <end position="63"/>
    </location>
</feature>
<feature type="strand" evidence="7">
    <location>
        <begin position="64"/>
        <end position="69"/>
    </location>
</feature>
<feature type="strand" evidence="7">
    <location>
        <begin position="72"/>
        <end position="83"/>
    </location>
</feature>
<feature type="strand" evidence="7">
    <location>
        <begin position="86"/>
        <end position="97"/>
    </location>
</feature>
<feature type="strand" evidence="7">
    <location>
        <begin position="103"/>
        <end position="107"/>
    </location>
</feature>
<accession>Q9EYW6</accession>
<accession>Q2FZL4</accession>
<dbReference type="EMBL" id="AF309515">
    <property type="protein sequence ID" value="AAG45845.1"/>
    <property type="molecule type" value="Genomic_DNA"/>
</dbReference>
<dbReference type="EMBL" id="CP000253">
    <property type="protein sequence ID" value="ABD30111.1"/>
    <property type="molecule type" value="Genomic_DNA"/>
</dbReference>
<dbReference type="RefSeq" id="WP_000284457.1">
    <property type="nucleotide sequence ID" value="NZ_LS483365.1"/>
</dbReference>
<dbReference type="RefSeq" id="YP_499539.1">
    <property type="nucleotide sequence ID" value="NC_007795.1"/>
</dbReference>
<dbReference type="PDB" id="1PXV">
    <property type="method" value="X-ray"/>
    <property type="resolution" value="1.80 A"/>
    <property type="chains" value="C/D=1-109"/>
</dbReference>
<dbReference type="PDB" id="1Y4H">
    <property type="method" value="X-ray"/>
    <property type="resolution" value="1.93 A"/>
    <property type="chains" value="C/D=1-109"/>
</dbReference>
<dbReference type="PDBsum" id="1PXV"/>
<dbReference type="PDBsum" id="1Y4H"/>
<dbReference type="SMR" id="Q9EYW6"/>
<dbReference type="STRING" id="93061.SAOUHSC_00986"/>
<dbReference type="MEROPS" id="I57.001"/>
<dbReference type="PaxDb" id="1280-SAXN108_1044"/>
<dbReference type="GeneID" id="3920387"/>
<dbReference type="KEGG" id="sao:SAOUHSC_00986"/>
<dbReference type="PATRIC" id="fig|93061.5.peg.906"/>
<dbReference type="eggNOG" id="ENOG50307R1">
    <property type="taxonomic scope" value="Bacteria"/>
</dbReference>
<dbReference type="HOGENOM" id="CLU_174854_0_0_9"/>
<dbReference type="OrthoDB" id="2409740at2"/>
<dbReference type="EvolutionaryTrace" id="Q9EYW6"/>
<dbReference type="PRO" id="PR:Q9EYW6"/>
<dbReference type="Proteomes" id="UP000008816">
    <property type="component" value="Chromosome"/>
</dbReference>
<dbReference type="GO" id="GO:0005737">
    <property type="term" value="C:cytoplasm"/>
    <property type="evidence" value="ECO:0007669"/>
    <property type="project" value="UniProtKB-SubCell"/>
</dbReference>
<dbReference type="GO" id="GO:0004869">
    <property type="term" value="F:cysteine-type endopeptidase inhibitor activity"/>
    <property type="evidence" value="ECO:0007669"/>
    <property type="project" value="UniProtKB-KW"/>
</dbReference>
<dbReference type="Gene3D" id="2.40.310.10">
    <property type="entry name" value="beta-Barrel protease inhibitors"/>
    <property type="match status" value="1"/>
</dbReference>
<dbReference type="InterPro" id="IPR016085">
    <property type="entry name" value="Protease_inh_b-brl_dom"/>
</dbReference>
<dbReference type="InterPro" id="IPR037296">
    <property type="entry name" value="Staphostatin_A/B"/>
</dbReference>
<dbReference type="InterPro" id="IPR015113">
    <property type="entry name" value="Staphostatin_B"/>
</dbReference>
<dbReference type="Pfam" id="PF09023">
    <property type="entry name" value="Staphostatin_B"/>
    <property type="match status" value="1"/>
</dbReference>
<dbReference type="SUPFAM" id="SSF50882">
    <property type="entry name" value="beta-Barrel protease inhibitors"/>
    <property type="match status" value="1"/>
</dbReference>
<organism>
    <name type="scientific">Staphylococcus aureus (strain NCTC 8325 / PS 47)</name>
    <dbReference type="NCBI Taxonomy" id="93061"/>
    <lineage>
        <taxon>Bacteria</taxon>
        <taxon>Bacillati</taxon>
        <taxon>Bacillota</taxon>
        <taxon>Bacilli</taxon>
        <taxon>Bacillales</taxon>
        <taxon>Staphylococcaceae</taxon>
        <taxon>Staphylococcus</taxon>
    </lineage>
</organism>
<gene>
    <name type="primary">sspC</name>
    <name type="ordered locus">SAOUHSC_00986</name>
</gene>
<reference key="1">
    <citation type="journal article" date="2001" name="Infect. Immun.">
        <title>Description of Staphylococcus serine protease (ssp) operon in Staphylococcus aureus and nonpolar inactivation of sspA-encoded serine protease.</title>
        <authorList>
            <person name="Rice K."/>
            <person name="Peralta R."/>
            <person name="Bast D."/>
            <person name="de Azavedo J."/>
            <person name="McGavin M.J."/>
        </authorList>
    </citation>
    <scope>NUCLEOTIDE SEQUENCE [GENOMIC DNA]</scope>
</reference>
<reference key="2">
    <citation type="book" date="2006" name="Gram positive pathogens, 2nd edition">
        <title>The Staphylococcus aureus NCTC 8325 genome.</title>
        <editorList>
            <person name="Fischetti V."/>
            <person name="Novick R."/>
            <person name="Ferretti J."/>
            <person name="Portnoy D."/>
            <person name="Rood J."/>
        </editorList>
        <authorList>
            <person name="Gillaspy A.F."/>
            <person name="Worrell V."/>
            <person name="Orvis J."/>
            <person name="Roe B.A."/>
            <person name="Dyer D.W."/>
            <person name="Iandolo J.J."/>
        </authorList>
    </citation>
    <scope>NUCLEOTIDE SEQUENCE [LARGE SCALE GENOMIC DNA]</scope>
    <source>
        <strain>NCTC 8325 / PS 47</strain>
    </source>
</reference>
<reference key="3">
    <citation type="journal article" date="2003" name="Mol. Microbiol.">
        <title>Staphostatins: an expanding new group of proteinase inhibitors with a unique specificity for the regulation of staphopains, Staphylococcus spp. cysteine proteinases.</title>
        <authorList>
            <person name="Rzychon M."/>
            <person name="Sabat A."/>
            <person name="Kosowska K."/>
            <person name="Potempa J."/>
            <person name="Dubin A."/>
        </authorList>
    </citation>
    <scope>PROTEIN SEQUENCE OF 1-8</scope>
    <scope>FUNCTION</scope>
    <scope>SUBCELLULAR LOCATION</scope>
    <scope>INTERACTION WITH STAPHOPAIN B</scope>
</reference>
<reference key="4">
    <citation type="journal article" date="1999" name="Mol. Gen. Genet.">
        <title>Interactive regulatory pathways control virulence determinant production and stability in response to environmental conditions in Staphylococcus aureus.</title>
        <authorList>
            <person name="Lindsay J.A."/>
            <person name="Foster S.J."/>
        </authorList>
    </citation>
    <scope>REGULATION</scope>
</reference>
<reference key="5">
    <citation type="journal article" date="2002" name="J. Biol. Chem.">
        <title>Identification of a novel maturation mechanism and restricted substrate specificity for the sspB cysteine protease of Staphylococcus aureus.</title>
        <authorList>
            <person name="Massimi I."/>
            <person name="Park E."/>
            <person name="Rice K."/>
            <person name="Mueller-Esterl W."/>
            <person name="Sauder D."/>
            <person name="McGavin M.J."/>
        </authorList>
    </citation>
    <scope>INHIBITION BY SSPA</scope>
</reference>
<reference key="6">
    <citation type="journal article" date="2004" name="Microbiology">
        <title>The role and regulation of the extracellular proteases of Staphylococcus aureus.</title>
        <authorList>
            <person name="Shaw L."/>
            <person name="Golonka E."/>
            <person name="Potempa J."/>
            <person name="Foster S.J."/>
        </authorList>
    </citation>
    <scope>INDUCTION</scope>
</reference>
<reference key="7">
    <citation type="journal article" date="2005" name="J. Bacteriol.">
        <title>Cytoplasmic control of premature activation of a secreted protease zymogen: deletion of staphostatin B (sspC) in Staphylococcus aureus 8325-4 yields a profound pleiotropic phenotype.</title>
        <authorList>
            <person name="Shaw L.N."/>
            <person name="Golonka E."/>
            <person name="Szmyd G."/>
            <person name="Foster S.J."/>
            <person name="Travis J."/>
            <person name="Potempa J."/>
        </authorList>
    </citation>
    <scope>FUNCTION</scope>
</reference>
<reference key="8">
    <citation type="journal article" date="2003" name="J. Biol. Chem.">
        <title>The staphostatin-staphopain complex: a forward binding inhibitor in complex with its target cysteine protease.</title>
        <authorList>
            <person name="Filipek R."/>
            <person name="Rzychon M."/>
            <person name="Oleksy A."/>
            <person name="Gruca M."/>
            <person name="Dubin A."/>
            <person name="Potempa J."/>
            <person name="Bochtler M."/>
        </authorList>
    </citation>
    <scope>X-RAY CRYSTALLOGRAPHY (1.8 ANGSTROMS) IN COMPLEX WITH STAPHOPAIN B</scope>
    <scope>MUTAGENESIS OF GLY-98</scope>
</reference>
<reference key="9">
    <citation type="journal article" date="2005" name="J. Biol. Chem.">
        <title>A comparison of staphostatin B with standard mechanism serine protease inhibitors.</title>
        <authorList>
            <person name="Filipek R."/>
            <person name="Potempa J."/>
            <person name="Bochtler M."/>
        </authorList>
    </citation>
    <scope>X-RAY CRYSTALLOGRAPHY (1.9 ANGSTROMS) IN COMPLEX WITH STAPHOPAIN B</scope>
</reference>
<name>SSPC_STAA8</name>
<protein>
    <recommendedName>
        <fullName>Staphostatin B</fullName>
    </recommendedName>
    <alternativeName>
        <fullName>Staphylococcal cysteine protease B inhibitor</fullName>
    </alternativeName>
</protein>
<sequence>MYQLQFINLVYDTTKLTHLEQTNINLFIGNWSNHQLQKSICIRHGDDTSHNQYHILFIDTAHQRIKFSSIDNEEIIYILDYDDTQHILMQTSSKQGIGTSRPIVYERLV</sequence>
<proteinExistence type="evidence at protein level"/>
<evidence type="ECO:0000269" key="1">
    <source>
    </source>
</evidence>
<evidence type="ECO:0000269" key="2">
    <source>
    </source>
</evidence>
<evidence type="ECO:0000269" key="3">
    <source>
    </source>
</evidence>
<evidence type="ECO:0000269" key="4">
    <source>
    </source>
</evidence>
<evidence type="ECO:0000269" key="5">
    <source>
    </source>
</evidence>
<evidence type="ECO:0000305" key="6"/>
<evidence type="ECO:0007829" key="7">
    <source>
        <dbReference type="PDB" id="1PXV"/>
    </source>
</evidence>
<keyword id="KW-0002">3D-structure</keyword>
<keyword id="KW-0963">Cytoplasm</keyword>
<keyword id="KW-0903">Direct protein sequencing</keyword>
<keyword id="KW-0646">Protease inhibitor</keyword>
<keyword id="KW-1185">Reference proteome</keyword>
<keyword id="KW-0789">Thiol protease inhibitor</keyword>
<keyword id="KW-0843">Virulence</keyword>